<feature type="chain" id="PRO_0000429407" description="Pantothenate kinase 2">
    <location>
        <begin position="1"/>
        <end position="904"/>
    </location>
</feature>
<feature type="region of interest" description="Pantothenate kinase" evidence="2">
    <location>
        <begin position="1"/>
        <end position="472"/>
    </location>
</feature>
<feature type="region of interest" description="Disordered" evidence="3">
    <location>
        <begin position="1"/>
        <end position="56"/>
    </location>
</feature>
<feature type="region of interest" description="4'-phosphopantetheine phosphatase" evidence="2">
    <location>
        <begin position="473"/>
        <end position="904"/>
    </location>
</feature>
<feature type="short sequence motif" description="Subfamily II EGMGR motif" evidence="2">
    <location>
        <begin position="855"/>
        <end position="859"/>
    </location>
</feature>
<feature type="binding site" evidence="1">
    <location>
        <position position="735"/>
    </location>
    <ligand>
        <name>Mn(2+)</name>
        <dbReference type="ChEBI" id="CHEBI:29035"/>
        <note>catalytic; for phosphatase activity</note>
    </ligand>
</feature>
<feature type="binding site" evidence="1">
    <location>
        <position position="736"/>
    </location>
    <ligand>
        <name>Mn(2+)</name>
        <dbReference type="ChEBI" id="CHEBI:29035"/>
        <note>catalytic; for phosphatase activity</note>
    </ligand>
</feature>
<feature type="binding site" evidence="1">
    <location>
        <position position="771"/>
    </location>
    <ligand>
        <name>Mn(2+)</name>
        <dbReference type="ChEBI" id="CHEBI:29035"/>
        <note>catalytic; for phosphatase activity</note>
    </ligand>
</feature>
<feature type="sequence conflict" description="In Ref. 4; AK106530." evidence="4" ref="4">
    <original>Q</original>
    <variation>R</variation>
    <location>
        <position position="301"/>
    </location>
</feature>
<evidence type="ECO:0000250" key="1">
    <source>
        <dbReference type="UniProtKB" id="Q04371"/>
    </source>
</evidence>
<evidence type="ECO:0000250" key="2">
    <source>
        <dbReference type="UniProtKB" id="Q8L5Y9"/>
    </source>
</evidence>
<evidence type="ECO:0000256" key="3">
    <source>
        <dbReference type="SAM" id="MobiDB-lite"/>
    </source>
</evidence>
<evidence type="ECO:0000305" key="4"/>
<comment type="function">
    <text evidence="2">Catalyzes the phosphorylation of pantothenate the first step in CoA biosynthesis. May play a role in the physiological regulation of the intracellular CoA concentration. Functionally redudant with PANK1 (By similarity). The phosphatase activity shows preference for normal or oxidatively damaged intermediates of 4'-phosphopantetheine, which provides strong indirect evidence that the phosphatase activity pre-empts damage in the CoA pathway (By similarity). Hydrolyzing excess 4'-phosphopantetheine could constitute a directed overflow mechanism to prevent its oxidation to the S-sulfonate, sulfonate, or other forms (By similarity). Hydrolyzing 4'-phosphopantetheine sulfonate or S-sulfonate would forestall their conversion to inactive forms of CoA and acyl carrier protein (By similarity).</text>
</comment>
<comment type="catalytic activity">
    <reaction evidence="2">
        <text>(R)-pantothenate + ATP = (R)-4'-phosphopantothenate + ADP + H(+)</text>
        <dbReference type="Rhea" id="RHEA:16373"/>
        <dbReference type="ChEBI" id="CHEBI:10986"/>
        <dbReference type="ChEBI" id="CHEBI:15378"/>
        <dbReference type="ChEBI" id="CHEBI:29032"/>
        <dbReference type="ChEBI" id="CHEBI:30616"/>
        <dbReference type="ChEBI" id="CHEBI:456216"/>
        <dbReference type="EC" id="2.7.1.33"/>
    </reaction>
    <physiologicalReaction direction="left-to-right" evidence="2">
        <dbReference type="Rhea" id="RHEA:16374"/>
    </physiologicalReaction>
</comment>
<comment type="catalytic activity">
    <reaction evidence="2">
        <text>(R)-4'-phosphopantothenate + H2O = (R)-pantothenate + phosphate</text>
        <dbReference type="Rhea" id="RHEA:68332"/>
        <dbReference type="ChEBI" id="CHEBI:10986"/>
        <dbReference type="ChEBI" id="CHEBI:15377"/>
        <dbReference type="ChEBI" id="CHEBI:29032"/>
        <dbReference type="ChEBI" id="CHEBI:43474"/>
    </reaction>
    <physiologicalReaction direction="left-to-right" evidence="2">
        <dbReference type="Rhea" id="RHEA:68333"/>
    </physiologicalReaction>
</comment>
<comment type="catalytic activity">
    <reaction evidence="2">
        <text>(R)-4'-phosphopantetheine + H2O = (R)-pantetheine + phosphate</text>
        <dbReference type="Rhea" id="RHEA:68328"/>
        <dbReference type="ChEBI" id="CHEBI:15377"/>
        <dbReference type="ChEBI" id="CHEBI:16753"/>
        <dbReference type="ChEBI" id="CHEBI:43474"/>
        <dbReference type="ChEBI" id="CHEBI:61723"/>
    </reaction>
    <physiologicalReaction direction="left-to-right" evidence="2">
        <dbReference type="Rhea" id="RHEA:68329"/>
    </physiologicalReaction>
</comment>
<comment type="catalytic activity">
    <reaction evidence="2">
        <text>(R)-4'-phosphopantetheine sulfonate + H2O = (R)-pantetheine sulfonate + phosphate</text>
        <dbReference type="Rhea" id="RHEA:68336"/>
        <dbReference type="ChEBI" id="CHEBI:15377"/>
        <dbReference type="ChEBI" id="CHEBI:43474"/>
        <dbReference type="ChEBI" id="CHEBI:177300"/>
        <dbReference type="ChEBI" id="CHEBI:177301"/>
    </reaction>
    <physiologicalReaction direction="left-to-right" evidence="2">
        <dbReference type="Rhea" id="RHEA:68337"/>
    </physiologicalReaction>
</comment>
<comment type="cofactor">
    <cofactor evidence="2">
        <name>Mn(2+)</name>
        <dbReference type="ChEBI" id="CHEBI:29035"/>
    </cofactor>
    <cofactor evidence="2">
        <name>Ni(2+)</name>
        <dbReference type="ChEBI" id="CHEBI:49786"/>
    </cofactor>
</comment>
<comment type="pathway">
    <text evidence="2">Cofactor biosynthesis; coenzyme A biosynthesis; CoA from (R)-pantothenate: step 1/5.</text>
</comment>
<comment type="domain">
    <text evidence="2">Subfamily II proteins have an EGMGR motif about 50 residues from the C-terminus (By similarity). This motif lies near the metal-binding residues in the putative substrate-binding cleft 2 (By similarity). Subfamily II proteins occur only in eukaryotes, in two forms: as a stand-alone unit in plants, and as a C-terminal domain of pantothenate kinases in plants, animals, and chytrid fungi (By similarity).</text>
</comment>
<comment type="similarity">
    <text evidence="4">In the N-terminal section; belongs to the type II pantothenate kinase family.</text>
</comment>
<comment type="similarity">
    <text evidence="4">In the C-terminal section; belongs to the damage-control phosphatase family. Phosphopantetheine phosphatase II subfamily.</text>
</comment>
<comment type="sequence caution" evidence="4">
    <conflict type="erroneous gene model prediction">
        <sequence resource="EMBL-CDS" id="BAD33319"/>
    </conflict>
</comment>
<comment type="sequence caution" evidence="4">
    <conflict type="erroneous gene model prediction">
        <sequence resource="EMBL-CDS" id="BAD46028"/>
    </conflict>
</comment>
<keyword id="KW-0067">ATP-binding</keyword>
<keyword id="KW-0173">Coenzyme A biosynthesis</keyword>
<keyword id="KW-0378">Hydrolase</keyword>
<keyword id="KW-0418">Kinase</keyword>
<keyword id="KW-0464">Manganese</keyword>
<keyword id="KW-0479">Metal-binding</keyword>
<keyword id="KW-0533">Nickel</keyword>
<keyword id="KW-0547">Nucleotide-binding</keyword>
<keyword id="KW-1185">Reference proteome</keyword>
<keyword id="KW-0808">Transferase</keyword>
<gene>
    <name type="ordered locus">Os09g0533100</name>
    <name type="ordered locus">LOC_Os09g36270</name>
    <name type="ORF">OJ1112_E07.4</name>
    <name type="ORF">P0515E01.23</name>
</gene>
<protein>
    <recommendedName>
        <fullName evidence="2">Pantothenate kinase 2</fullName>
    </recommendedName>
    <alternativeName>
        <fullName evidence="2">Pantothenic acid kinase 2</fullName>
    </alternativeName>
    <domain>
        <recommendedName>
            <fullName evidence="2">Pantothenate kinase</fullName>
            <ecNumber evidence="2">2.7.1.33</ecNumber>
        </recommendedName>
    </domain>
    <domain>
        <recommendedName>
            <fullName evidence="2">4'-phosphopantetheine phosphatase</fullName>
            <ecNumber evidence="2">3.1.3.-</ecNumber>
        </recommendedName>
    </domain>
</protein>
<accession>Q0J035</accession>
<accession>Q69SH7</accession>
<reference key="1">
    <citation type="journal article" date="2005" name="Nature">
        <title>The map-based sequence of the rice genome.</title>
        <authorList>
            <consortium name="International rice genome sequencing project (IRGSP)"/>
        </authorList>
    </citation>
    <scope>NUCLEOTIDE SEQUENCE [LARGE SCALE GENOMIC DNA]</scope>
    <source>
        <strain>cv. Nipponbare</strain>
    </source>
</reference>
<reference key="2">
    <citation type="journal article" date="2008" name="Nucleic Acids Res.">
        <title>The rice annotation project database (RAP-DB): 2008 update.</title>
        <authorList>
            <consortium name="The rice annotation project (RAP)"/>
        </authorList>
    </citation>
    <scope>GENOME REANNOTATION</scope>
    <source>
        <strain>cv. Nipponbare</strain>
    </source>
</reference>
<reference key="3">
    <citation type="journal article" date="2013" name="Rice">
        <title>Improvement of the Oryza sativa Nipponbare reference genome using next generation sequence and optical map data.</title>
        <authorList>
            <person name="Kawahara Y."/>
            <person name="de la Bastide M."/>
            <person name="Hamilton J.P."/>
            <person name="Kanamori H."/>
            <person name="McCombie W.R."/>
            <person name="Ouyang S."/>
            <person name="Schwartz D.C."/>
            <person name="Tanaka T."/>
            <person name="Wu J."/>
            <person name="Zhou S."/>
            <person name="Childs K.L."/>
            <person name="Davidson R.M."/>
            <person name="Lin H."/>
            <person name="Quesada-Ocampo L."/>
            <person name="Vaillancourt B."/>
            <person name="Sakai H."/>
            <person name="Lee S.S."/>
            <person name="Kim J."/>
            <person name="Numa H."/>
            <person name="Itoh T."/>
            <person name="Buell C.R."/>
            <person name="Matsumoto T."/>
        </authorList>
    </citation>
    <scope>GENOME REANNOTATION</scope>
    <source>
        <strain>cv. Nipponbare</strain>
    </source>
</reference>
<reference key="4">
    <citation type="journal article" date="2003" name="Science">
        <title>Collection, mapping, and annotation of over 28,000 cDNA clones from japonica rice.</title>
        <authorList>
            <consortium name="The rice full-length cDNA consortium"/>
        </authorList>
    </citation>
    <scope>NUCLEOTIDE SEQUENCE [LARGE SCALE MRNA] OF 150-904</scope>
    <source>
        <strain>cv. Nipponbare</strain>
    </source>
</reference>
<name>PANK2_ORYSJ</name>
<dbReference type="EC" id="2.7.1.33" evidence="2"/>
<dbReference type="EC" id="3.1.3.-" evidence="2"/>
<dbReference type="EMBL" id="AP005092">
    <property type="protein sequence ID" value="BAD33319.1"/>
    <property type="status" value="ALT_SEQ"/>
    <property type="molecule type" value="Genomic_DNA"/>
</dbReference>
<dbReference type="EMBL" id="AP005314">
    <property type="protein sequence ID" value="BAD46028.1"/>
    <property type="status" value="ALT_SEQ"/>
    <property type="molecule type" value="Genomic_DNA"/>
</dbReference>
<dbReference type="EMBL" id="AP008215">
    <property type="protein sequence ID" value="BAF25680.1"/>
    <property type="molecule type" value="Genomic_DNA"/>
</dbReference>
<dbReference type="EMBL" id="AP014965">
    <property type="status" value="NOT_ANNOTATED_CDS"/>
    <property type="molecule type" value="Genomic_DNA"/>
</dbReference>
<dbReference type="EMBL" id="AK106530">
    <property type="status" value="NOT_ANNOTATED_CDS"/>
    <property type="molecule type" value="mRNA"/>
</dbReference>
<dbReference type="RefSeq" id="XP_015612123.1">
    <property type="nucleotide sequence ID" value="XM_015756637.1"/>
</dbReference>
<dbReference type="SMR" id="Q0J035"/>
<dbReference type="FunCoup" id="Q0J035">
    <property type="interactions" value="1753"/>
</dbReference>
<dbReference type="STRING" id="39947.Q0J035"/>
<dbReference type="PaxDb" id="39947-Q0J035"/>
<dbReference type="KEGG" id="dosa:Os09g0533100"/>
<dbReference type="eggNOG" id="KOG2201">
    <property type="taxonomic scope" value="Eukaryota"/>
</dbReference>
<dbReference type="eggNOG" id="KOG4584">
    <property type="taxonomic scope" value="Eukaryota"/>
</dbReference>
<dbReference type="HOGENOM" id="CLU_012496_0_0_1"/>
<dbReference type="InParanoid" id="Q0J035"/>
<dbReference type="OrthoDB" id="498611at2759"/>
<dbReference type="UniPathway" id="UPA00241">
    <property type="reaction ID" value="UER00352"/>
</dbReference>
<dbReference type="Proteomes" id="UP000000763">
    <property type="component" value="Chromosome 9"/>
</dbReference>
<dbReference type="Proteomes" id="UP000059680">
    <property type="component" value="Chromosome 9"/>
</dbReference>
<dbReference type="GO" id="GO:0005829">
    <property type="term" value="C:cytosol"/>
    <property type="evidence" value="ECO:0000318"/>
    <property type="project" value="GO_Central"/>
</dbReference>
<dbReference type="GO" id="GO:0005634">
    <property type="term" value="C:nucleus"/>
    <property type="evidence" value="ECO:0000318"/>
    <property type="project" value="GO_Central"/>
</dbReference>
<dbReference type="GO" id="GO:0005524">
    <property type="term" value="F:ATP binding"/>
    <property type="evidence" value="ECO:0007669"/>
    <property type="project" value="UniProtKB-KW"/>
</dbReference>
<dbReference type="GO" id="GO:0016787">
    <property type="term" value="F:hydrolase activity"/>
    <property type="evidence" value="ECO:0007669"/>
    <property type="project" value="UniProtKB-KW"/>
</dbReference>
<dbReference type="GO" id="GO:0046872">
    <property type="term" value="F:metal ion binding"/>
    <property type="evidence" value="ECO:0007669"/>
    <property type="project" value="UniProtKB-KW"/>
</dbReference>
<dbReference type="GO" id="GO:0004594">
    <property type="term" value="F:pantothenate kinase activity"/>
    <property type="evidence" value="ECO:0000318"/>
    <property type="project" value="GO_Central"/>
</dbReference>
<dbReference type="GO" id="GO:0015937">
    <property type="term" value="P:coenzyme A biosynthetic process"/>
    <property type="evidence" value="ECO:0000318"/>
    <property type="project" value="GO_Central"/>
</dbReference>
<dbReference type="CDD" id="cd24123">
    <property type="entry name" value="ASKHA_NBD_PanK-II_Pank4"/>
    <property type="match status" value="1"/>
</dbReference>
<dbReference type="FunFam" id="3.30.420.40:FF:000442">
    <property type="entry name" value="Pantothenate kinase 1"/>
    <property type="match status" value="1"/>
</dbReference>
<dbReference type="FunFam" id="1.20.1700.10:FF:000002">
    <property type="entry name" value="Pantothenate kinase 2"/>
    <property type="match status" value="1"/>
</dbReference>
<dbReference type="FunFam" id="3.30.420.40:FF:000273">
    <property type="entry name" value="Pantothenate kinase 2"/>
    <property type="match status" value="1"/>
</dbReference>
<dbReference type="FunFam" id="3.30.420.510:FF:000003">
    <property type="entry name" value="Pantothenate kinase 2"/>
    <property type="match status" value="1"/>
</dbReference>
<dbReference type="Gene3D" id="3.30.420.40">
    <property type="match status" value="1"/>
</dbReference>
<dbReference type="Gene3D" id="3.30.420.510">
    <property type="match status" value="1"/>
</dbReference>
<dbReference type="Gene3D" id="1.20.1700.10">
    <property type="entry name" value="AF1104-like"/>
    <property type="match status" value="1"/>
</dbReference>
<dbReference type="Gene3D" id="3.40.50.10880">
    <property type="entry name" value="Uncharacterised protein PF01937, DUF89, domain 3"/>
    <property type="match status" value="1"/>
</dbReference>
<dbReference type="InterPro" id="IPR036075">
    <property type="entry name" value="ARMT-1-like_metal-bd_sf"/>
</dbReference>
<dbReference type="InterPro" id="IPR002791">
    <property type="entry name" value="ARMT1-like_metal-bd"/>
</dbReference>
<dbReference type="InterPro" id="IPR035073">
    <property type="entry name" value="At2g17340_3_helix_bundle"/>
</dbReference>
<dbReference type="InterPro" id="IPR043129">
    <property type="entry name" value="ATPase_NBD"/>
</dbReference>
<dbReference type="InterPro" id="IPR015844">
    <property type="entry name" value="PanK_long"/>
</dbReference>
<dbReference type="InterPro" id="IPR004567">
    <property type="entry name" value="Type_II_PanK"/>
</dbReference>
<dbReference type="NCBIfam" id="TIGR00555">
    <property type="entry name" value="panK_eukar"/>
    <property type="match status" value="1"/>
</dbReference>
<dbReference type="PANTHER" id="PTHR12280:SF20">
    <property type="entry name" value="4'-PHOSPHOPANTETHEINE PHOSPHATASE"/>
    <property type="match status" value="1"/>
</dbReference>
<dbReference type="PANTHER" id="PTHR12280">
    <property type="entry name" value="PANTOTHENATE KINASE"/>
    <property type="match status" value="1"/>
</dbReference>
<dbReference type="Pfam" id="PF01937">
    <property type="entry name" value="ARMT1-like_dom"/>
    <property type="match status" value="1"/>
</dbReference>
<dbReference type="Pfam" id="PF03630">
    <property type="entry name" value="Fumble"/>
    <property type="match status" value="1"/>
</dbReference>
<dbReference type="PIRSF" id="PIRSF036939">
    <property type="entry name" value="PanK_long"/>
    <property type="match status" value="1"/>
</dbReference>
<dbReference type="SUPFAM" id="SSF53067">
    <property type="entry name" value="Actin-like ATPase domain"/>
    <property type="match status" value="2"/>
</dbReference>
<dbReference type="SUPFAM" id="SSF111321">
    <property type="entry name" value="AF1104-like"/>
    <property type="match status" value="1"/>
</dbReference>
<sequence>MAANNNSDPILDEGGGGGVKHEAVGEAGEGKGGGGGAAATQAPAAMLPRSGSRPQLDLSGAAIHGNLEDRNPTILLPNQSDDISHLALDIGGSLIKLVYFSRHAEHSSEDKRKLSTKRRLGMLNGGRRSYPVLGGRLHFVKFETGKLNECLDFISSKQLHRGGVDSPSWRSGAQPDNIVIKATGGGAFKYADLFKERLGVSLEKEDEMDCLVAGANFLLKSIRHEAFTHMDGQKEYVQIDQNDLFPFLLVNVGSGVSIIKVDGHGKFQRVSGTNVGGGTYWGLGRLMTKCKSFDELLELSQRGDNSTIDMLVGDIYGGLDYSKIGLSASTIASSFGKTISDDKELSDYRPEDISLSLLRMISYNIGQISYLNALRYGLKRIFFGGFFIRGHAYTMDTISFAVNFWSKGEAKAMFLRHEGFLGALGAFMSYEKHGLDDLRIHHLVERFPMGAPYVGGKIHGPPLGDLNEKISWMEKFVQKGTQITAPVPVGFPVTTGMGGFERPTAKGDILRSDASAALNVGVLHLVPTLDVFPLLEDPKMYEPNTIDLDLNEYKYWFKILSDHLPDLVDKAVASEGGTDDAKRRGDAFAHAFSAHLARLMEEPAAYGKFGLANLLELREECLREFQFVDAYVSIKQRENEASLAVLPDLLMELDSMNEEARLLALIEGVLAANIFDWGSRACVDLYHKGTIIEIYRMSRKKMQRPWRIDDFDMFKKRMLADKKGQPYKRALLFVDNSGADVVLGMIPLARELLRNGTEVVLVANSLPALNDVTANELPGIVAEAAKHCGILRKAAEAGGLIFDAMAGIQDDLKDEPVSVPLMVVENGCGSPCIDFRQVSSELAAAAKDADLLILEGMGRSLHTNLNARFKCDTLKLAMVKNQRLAEKLFNGNIYDCICKFEPVP</sequence>
<organism>
    <name type="scientific">Oryza sativa subsp. japonica</name>
    <name type="common">Rice</name>
    <dbReference type="NCBI Taxonomy" id="39947"/>
    <lineage>
        <taxon>Eukaryota</taxon>
        <taxon>Viridiplantae</taxon>
        <taxon>Streptophyta</taxon>
        <taxon>Embryophyta</taxon>
        <taxon>Tracheophyta</taxon>
        <taxon>Spermatophyta</taxon>
        <taxon>Magnoliopsida</taxon>
        <taxon>Liliopsida</taxon>
        <taxon>Poales</taxon>
        <taxon>Poaceae</taxon>
        <taxon>BOP clade</taxon>
        <taxon>Oryzoideae</taxon>
        <taxon>Oryzeae</taxon>
        <taxon>Oryzinae</taxon>
        <taxon>Oryza</taxon>
        <taxon>Oryza sativa</taxon>
    </lineage>
</organism>
<proteinExistence type="evidence at transcript level"/>